<feature type="chain" id="PRO_1000143219" description="Small ribosomal subunit protein uS17">
    <location>
        <begin position="1"/>
        <end position="87"/>
    </location>
</feature>
<name>RS17_BACC4</name>
<sequence length="87" mass="10189">MSERNQRKVYTGRVVSDKMDKTITVLVETYKTHSLYGKRVKYSKKYKAHDEQNQAKLGDIVKIMETRPLSATKRFRLVEIVEEAVII</sequence>
<reference key="1">
    <citation type="submission" date="2008-10" db="EMBL/GenBank/DDBJ databases">
        <title>Genome sequence of Bacillus cereus B4264.</title>
        <authorList>
            <person name="Dodson R.J."/>
            <person name="Durkin A.S."/>
            <person name="Rosovitz M.J."/>
            <person name="Rasko D.A."/>
            <person name="Hoffmaster A."/>
            <person name="Ravel J."/>
            <person name="Sutton G."/>
        </authorList>
    </citation>
    <scope>NUCLEOTIDE SEQUENCE [LARGE SCALE GENOMIC DNA]</scope>
    <source>
        <strain>B4264</strain>
    </source>
</reference>
<accession>B7HJ57</accession>
<gene>
    <name evidence="1" type="primary">rpsQ</name>
    <name type="ordered locus">BCB4264_A0140</name>
</gene>
<dbReference type="EMBL" id="CP001176">
    <property type="protein sequence ID" value="ACK58820.1"/>
    <property type="molecule type" value="Genomic_DNA"/>
</dbReference>
<dbReference type="RefSeq" id="WP_000004106.1">
    <property type="nucleotide sequence ID" value="NZ_VEHB01000017.1"/>
</dbReference>
<dbReference type="SMR" id="B7HJ57"/>
<dbReference type="GeneID" id="93010934"/>
<dbReference type="KEGG" id="bcb:BCB4264_A0140"/>
<dbReference type="HOGENOM" id="CLU_073626_1_0_9"/>
<dbReference type="Proteomes" id="UP000007096">
    <property type="component" value="Chromosome"/>
</dbReference>
<dbReference type="GO" id="GO:0022627">
    <property type="term" value="C:cytosolic small ribosomal subunit"/>
    <property type="evidence" value="ECO:0007669"/>
    <property type="project" value="TreeGrafter"/>
</dbReference>
<dbReference type="GO" id="GO:0019843">
    <property type="term" value="F:rRNA binding"/>
    <property type="evidence" value="ECO:0007669"/>
    <property type="project" value="UniProtKB-UniRule"/>
</dbReference>
<dbReference type="GO" id="GO:0003735">
    <property type="term" value="F:structural constituent of ribosome"/>
    <property type="evidence" value="ECO:0007669"/>
    <property type="project" value="InterPro"/>
</dbReference>
<dbReference type="GO" id="GO:0006412">
    <property type="term" value="P:translation"/>
    <property type="evidence" value="ECO:0007669"/>
    <property type="project" value="UniProtKB-UniRule"/>
</dbReference>
<dbReference type="CDD" id="cd00364">
    <property type="entry name" value="Ribosomal_uS17"/>
    <property type="match status" value="1"/>
</dbReference>
<dbReference type="FunFam" id="2.40.50.140:FF:000026">
    <property type="entry name" value="30S ribosomal protein S17"/>
    <property type="match status" value="1"/>
</dbReference>
<dbReference type="Gene3D" id="2.40.50.140">
    <property type="entry name" value="Nucleic acid-binding proteins"/>
    <property type="match status" value="1"/>
</dbReference>
<dbReference type="HAMAP" id="MF_01345_B">
    <property type="entry name" value="Ribosomal_uS17_B"/>
    <property type="match status" value="1"/>
</dbReference>
<dbReference type="InterPro" id="IPR012340">
    <property type="entry name" value="NA-bd_OB-fold"/>
</dbReference>
<dbReference type="InterPro" id="IPR000266">
    <property type="entry name" value="Ribosomal_uS17"/>
</dbReference>
<dbReference type="InterPro" id="IPR019984">
    <property type="entry name" value="Ribosomal_uS17_bact/chlr"/>
</dbReference>
<dbReference type="InterPro" id="IPR019979">
    <property type="entry name" value="Ribosomal_uS17_CS"/>
</dbReference>
<dbReference type="NCBIfam" id="NF004123">
    <property type="entry name" value="PRK05610.1"/>
    <property type="match status" value="1"/>
</dbReference>
<dbReference type="NCBIfam" id="TIGR03635">
    <property type="entry name" value="uS17_bact"/>
    <property type="match status" value="1"/>
</dbReference>
<dbReference type="PANTHER" id="PTHR10744">
    <property type="entry name" value="40S RIBOSOMAL PROTEIN S11 FAMILY MEMBER"/>
    <property type="match status" value="1"/>
</dbReference>
<dbReference type="PANTHER" id="PTHR10744:SF1">
    <property type="entry name" value="SMALL RIBOSOMAL SUBUNIT PROTEIN US17M"/>
    <property type="match status" value="1"/>
</dbReference>
<dbReference type="Pfam" id="PF00366">
    <property type="entry name" value="Ribosomal_S17"/>
    <property type="match status" value="1"/>
</dbReference>
<dbReference type="PRINTS" id="PR00973">
    <property type="entry name" value="RIBOSOMALS17"/>
</dbReference>
<dbReference type="SUPFAM" id="SSF50249">
    <property type="entry name" value="Nucleic acid-binding proteins"/>
    <property type="match status" value="1"/>
</dbReference>
<dbReference type="PROSITE" id="PS00056">
    <property type="entry name" value="RIBOSOMAL_S17"/>
    <property type="match status" value="1"/>
</dbReference>
<keyword id="KW-0687">Ribonucleoprotein</keyword>
<keyword id="KW-0689">Ribosomal protein</keyword>
<keyword id="KW-0694">RNA-binding</keyword>
<keyword id="KW-0699">rRNA-binding</keyword>
<proteinExistence type="inferred from homology"/>
<evidence type="ECO:0000255" key="1">
    <source>
        <dbReference type="HAMAP-Rule" id="MF_01345"/>
    </source>
</evidence>
<evidence type="ECO:0000305" key="2"/>
<protein>
    <recommendedName>
        <fullName evidence="1">Small ribosomal subunit protein uS17</fullName>
    </recommendedName>
    <alternativeName>
        <fullName evidence="2">30S ribosomal protein S17</fullName>
    </alternativeName>
</protein>
<organism>
    <name type="scientific">Bacillus cereus (strain B4264)</name>
    <dbReference type="NCBI Taxonomy" id="405532"/>
    <lineage>
        <taxon>Bacteria</taxon>
        <taxon>Bacillati</taxon>
        <taxon>Bacillota</taxon>
        <taxon>Bacilli</taxon>
        <taxon>Bacillales</taxon>
        <taxon>Bacillaceae</taxon>
        <taxon>Bacillus</taxon>
        <taxon>Bacillus cereus group</taxon>
    </lineage>
</organism>
<comment type="function">
    <text evidence="1">One of the primary rRNA binding proteins, it binds specifically to the 5'-end of 16S ribosomal RNA.</text>
</comment>
<comment type="subunit">
    <text evidence="1">Part of the 30S ribosomal subunit.</text>
</comment>
<comment type="similarity">
    <text evidence="1">Belongs to the universal ribosomal protein uS17 family.</text>
</comment>